<keyword id="KW-0067">ATP-binding</keyword>
<keyword id="KW-0963">Cytoplasm</keyword>
<keyword id="KW-0227">DNA damage</keyword>
<keyword id="KW-0234">DNA repair</keyword>
<keyword id="KW-0235">DNA replication</keyword>
<keyword id="KW-0238">DNA-binding</keyword>
<keyword id="KW-0547">Nucleotide-binding</keyword>
<keyword id="KW-1185">Reference proteome</keyword>
<keyword id="KW-0742">SOS response</keyword>
<name>RECF_LACAC</name>
<comment type="function">
    <text evidence="1">The RecF protein is involved in DNA metabolism; it is required for DNA replication and normal SOS inducibility. RecF binds preferentially to single-stranded, linear DNA. It also seems to bind ATP.</text>
</comment>
<comment type="subcellular location">
    <subcellularLocation>
        <location evidence="1">Cytoplasm</location>
    </subcellularLocation>
</comment>
<comment type="similarity">
    <text evidence="1">Belongs to the RecF family.</text>
</comment>
<gene>
    <name evidence="1" type="primary">recF</name>
    <name type="ordered locus">LBA0004</name>
</gene>
<sequence length="375" mass="42851">MYLDHLTVQNFRNLKKLDVDFDPNVNIFIGKNAQGKTNLLEAIYFLALTRSHRTSSDRDLIGFDGEYTNLAGHVQKSQVTLNLRVLITKKGKKVWINRIEQAKLSKYVGQLNAILFSPEDLELIKGAPSLRRRFMDQEFGQINAEYLYFASKYRQVLIQKNNYLKQLAKGKAKDQVFLDVLSDQLAGIAAELIYRRFKFLTYLSHYASDAYTHISLGSEKLSIAYHPSVSDITADDTTEEIYQKILNSFNRNKASEIRKGTTTSGPHRDDIEFKLDGKNAHLYASQGQQRSIALSIKLAEIQLVHQLTDEYPLLLLDDVMSELDHGRQSALLNYIHGKTQTFITTTDLEGISWDIIKKPRVYHIQSGTISLEKEN</sequence>
<reference key="1">
    <citation type="journal article" date="2005" name="Proc. Natl. Acad. Sci. U.S.A.">
        <title>Complete genome sequence of the probiotic lactic acid bacterium Lactobacillus acidophilus NCFM.</title>
        <authorList>
            <person name="Altermann E."/>
            <person name="Russell W.M."/>
            <person name="Azcarate-Peril M.A."/>
            <person name="Barrangou R."/>
            <person name="Buck B.L."/>
            <person name="McAuliffe O."/>
            <person name="Souther N."/>
            <person name="Dobson A."/>
            <person name="Duong T."/>
            <person name="Callanan M."/>
            <person name="Lick S."/>
            <person name="Hamrick A."/>
            <person name="Cano R."/>
            <person name="Klaenhammer T.R."/>
        </authorList>
    </citation>
    <scope>NUCLEOTIDE SEQUENCE [LARGE SCALE GENOMIC DNA]</scope>
    <source>
        <strain>ATCC 700396 / NCK56 / N2 / NCFM</strain>
    </source>
</reference>
<organism>
    <name type="scientific">Lactobacillus acidophilus (strain ATCC 700396 / NCK56 / N2 / NCFM)</name>
    <dbReference type="NCBI Taxonomy" id="272621"/>
    <lineage>
        <taxon>Bacteria</taxon>
        <taxon>Bacillati</taxon>
        <taxon>Bacillota</taxon>
        <taxon>Bacilli</taxon>
        <taxon>Lactobacillales</taxon>
        <taxon>Lactobacillaceae</taxon>
        <taxon>Lactobacillus</taxon>
    </lineage>
</organism>
<dbReference type="EMBL" id="CP000033">
    <property type="protein sequence ID" value="AAV41912.1"/>
    <property type="molecule type" value="Genomic_DNA"/>
</dbReference>
<dbReference type="RefSeq" id="WP_003549377.1">
    <property type="nucleotide sequence ID" value="NC_006814.3"/>
</dbReference>
<dbReference type="RefSeq" id="YP_192943.1">
    <property type="nucleotide sequence ID" value="NC_006814.3"/>
</dbReference>
<dbReference type="SMR" id="Q5FN12"/>
<dbReference type="STRING" id="272621.LBA0004"/>
<dbReference type="GeneID" id="93290883"/>
<dbReference type="KEGG" id="lac:LBA0004"/>
<dbReference type="PATRIC" id="fig|272621.13.peg.4"/>
<dbReference type="eggNOG" id="COG1195">
    <property type="taxonomic scope" value="Bacteria"/>
</dbReference>
<dbReference type="HOGENOM" id="CLU_040267_0_1_9"/>
<dbReference type="OrthoDB" id="9803889at2"/>
<dbReference type="BioCyc" id="LACI272621:G1G49-4-MONOMER"/>
<dbReference type="Proteomes" id="UP000006381">
    <property type="component" value="Chromosome"/>
</dbReference>
<dbReference type="GO" id="GO:0005737">
    <property type="term" value="C:cytoplasm"/>
    <property type="evidence" value="ECO:0007669"/>
    <property type="project" value="UniProtKB-SubCell"/>
</dbReference>
<dbReference type="GO" id="GO:0005524">
    <property type="term" value="F:ATP binding"/>
    <property type="evidence" value="ECO:0007669"/>
    <property type="project" value="UniProtKB-UniRule"/>
</dbReference>
<dbReference type="GO" id="GO:0003697">
    <property type="term" value="F:single-stranded DNA binding"/>
    <property type="evidence" value="ECO:0007669"/>
    <property type="project" value="UniProtKB-UniRule"/>
</dbReference>
<dbReference type="GO" id="GO:0006260">
    <property type="term" value="P:DNA replication"/>
    <property type="evidence" value="ECO:0007669"/>
    <property type="project" value="UniProtKB-UniRule"/>
</dbReference>
<dbReference type="GO" id="GO:0000731">
    <property type="term" value="P:DNA synthesis involved in DNA repair"/>
    <property type="evidence" value="ECO:0007669"/>
    <property type="project" value="TreeGrafter"/>
</dbReference>
<dbReference type="GO" id="GO:0006302">
    <property type="term" value="P:double-strand break repair"/>
    <property type="evidence" value="ECO:0007669"/>
    <property type="project" value="TreeGrafter"/>
</dbReference>
<dbReference type="GO" id="GO:0009432">
    <property type="term" value="P:SOS response"/>
    <property type="evidence" value="ECO:0007669"/>
    <property type="project" value="UniProtKB-UniRule"/>
</dbReference>
<dbReference type="CDD" id="cd03242">
    <property type="entry name" value="ABC_RecF"/>
    <property type="match status" value="1"/>
</dbReference>
<dbReference type="Gene3D" id="3.40.50.300">
    <property type="entry name" value="P-loop containing nucleotide triphosphate hydrolases"/>
    <property type="match status" value="1"/>
</dbReference>
<dbReference type="Gene3D" id="1.20.1050.90">
    <property type="entry name" value="RecF/RecN/SMC, N-terminal domain"/>
    <property type="match status" value="1"/>
</dbReference>
<dbReference type="HAMAP" id="MF_00365">
    <property type="entry name" value="RecF"/>
    <property type="match status" value="1"/>
</dbReference>
<dbReference type="InterPro" id="IPR001238">
    <property type="entry name" value="DNA-binding_RecF"/>
</dbReference>
<dbReference type="InterPro" id="IPR018078">
    <property type="entry name" value="DNA-binding_RecF_CS"/>
</dbReference>
<dbReference type="InterPro" id="IPR027417">
    <property type="entry name" value="P-loop_NTPase"/>
</dbReference>
<dbReference type="InterPro" id="IPR003395">
    <property type="entry name" value="RecF/RecN/SMC_N"/>
</dbReference>
<dbReference type="InterPro" id="IPR042174">
    <property type="entry name" value="RecF_2"/>
</dbReference>
<dbReference type="NCBIfam" id="TIGR00611">
    <property type="entry name" value="recf"/>
    <property type="match status" value="1"/>
</dbReference>
<dbReference type="PANTHER" id="PTHR32182">
    <property type="entry name" value="DNA REPLICATION AND REPAIR PROTEIN RECF"/>
    <property type="match status" value="1"/>
</dbReference>
<dbReference type="PANTHER" id="PTHR32182:SF0">
    <property type="entry name" value="DNA REPLICATION AND REPAIR PROTEIN RECF"/>
    <property type="match status" value="1"/>
</dbReference>
<dbReference type="Pfam" id="PF02463">
    <property type="entry name" value="SMC_N"/>
    <property type="match status" value="1"/>
</dbReference>
<dbReference type="SUPFAM" id="SSF52540">
    <property type="entry name" value="P-loop containing nucleoside triphosphate hydrolases"/>
    <property type="match status" value="1"/>
</dbReference>
<dbReference type="PROSITE" id="PS00617">
    <property type="entry name" value="RECF_1"/>
    <property type="match status" value="1"/>
</dbReference>
<dbReference type="PROSITE" id="PS00618">
    <property type="entry name" value="RECF_2"/>
    <property type="match status" value="1"/>
</dbReference>
<proteinExistence type="inferred from homology"/>
<protein>
    <recommendedName>
        <fullName evidence="1">DNA replication and repair protein RecF</fullName>
    </recommendedName>
</protein>
<evidence type="ECO:0000255" key="1">
    <source>
        <dbReference type="HAMAP-Rule" id="MF_00365"/>
    </source>
</evidence>
<feature type="chain" id="PRO_0000236124" description="DNA replication and repair protein RecF">
    <location>
        <begin position="1"/>
        <end position="375"/>
    </location>
</feature>
<feature type="binding site" evidence="1">
    <location>
        <begin position="30"/>
        <end position="37"/>
    </location>
    <ligand>
        <name>ATP</name>
        <dbReference type="ChEBI" id="CHEBI:30616"/>
    </ligand>
</feature>
<accession>Q5FN12</accession>